<protein>
    <recommendedName>
        <fullName evidence="1">Polyribonucleotide nucleotidyltransferase</fullName>
        <ecNumber evidence="1">2.7.7.8</ecNumber>
    </recommendedName>
    <alternativeName>
        <fullName evidence="1">Polynucleotide phosphorylase</fullName>
        <shortName evidence="1">PNPase</shortName>
    </alternativeName>
</protein>
<accession>B9MR54</accession>
<evidence type="ECO:0000255" key="1">
    <source>
        <dbReference type="HAMAP-Rule" id="MF_01595"/>
    </source>
</evidence>
<sequence>MESKIYKMELAGRELSFEIGKYALLANGAVLARYGDTAVLVTACASEKPREGINFFPLTVDYEERLYSVGKIPGGFIKREGKPSEKAILSARLIDRPIRPLFPKDFYHDVSVIATVLSVDPDNPPDVLAMLGSSVALSISDIPFEGPTGSVLVGYVDDKIVINPTAKEREVSKLHLVVSGTKDRVMMIEAGAKEVSEDIMLEAIMRAQEEIKKIVEFIEGIVREVGKPKMEYQKRIVPEDIKQKVREIAYDKVYQYVQIPDKIERDKKLDELKEEVFKAFEGETEETLLLVDDALYSLEKEIVRKMIAEEGKRPDGRKFDEIRPLYAEIGILPRTHGSALFKRGYTQVLTVATLGTKGEMQFLDGLEEEEAKRYMHHYNFPPFSTGESKPVRGPGRREIGHGALAERALEPVIPSEDEFPYTIRLVSEVLTSNGSTSQASVCGSTLALMDAGVPIKAPVAGISIGLITKDDGSFILLTDIQGIEDFFGDMDFKVAGTREGITAIQLDIKIHGLTKEIIEKALYQAREARLKILDFMQTVIDKPRSELSPYAPKIFKTTVDPEKIRDIIGPGGKMINKIIAETNVKIDIEPDGRIFVAAPDDISGNRAISMIEGIGREIEVGQFFLGKVTRTASYGAFVEIYPGKEGLVHISQLDERRLKSVDEVVKVGDLVLVKVIGIDKLGRLSLSRKEALNVTYSRKAK</sequence>
<comment type="function">
    <text evidence="1">Involved in mRNA degradation. Catalyzes the phosphorolysis of single-stranded polyribonucleotides processively in the 3'- to 5'-direction.</text>
</comment>
<comment type="catalytic activity">
    <reaction evidence="1">
        <text>RNA(n+1) + phosphate = RNA(n) + a ribonucleoside 5'-diphosphate</text>
        <dbReference type="Rhea" id="RHEA:22096"/>
        <dbReference type="Rhea" id="RHEA-COMP:14527"/>
        <dbReference type="Rhea" id="RHEA-COMP:17342"/>
        <dbReference type="ChEBI" id="CHEBI:43474"/>
        <dbReference type="ChEBI" id="CHEBI:57930"/>
        <dbReference type="ChEBI" id="CHEBI:140395"/>
        <dbReference type="EC" id="2.7.7.8"/>
    </reaction>
</comment>
<comment type="cofactor">
    <cofactor evidence="1">
        <name>Mg(2+)</name>
        <dbReference type="ChEBI" id="CHEBI:18420"/>
    </cofactor>
</comment>
<comment type="subcellular location">
    <subcellularLocation>
        <location evidence="1">Cytoplasm</location>
    </subcellularLocation>
</comment>
<comment type="similarity">
    <text evidence="1">Belongs to the polyribonucleotide nucleotidyltransferase family.</text>
</comment>
<gene>
    <name evidence="1" type="primary">pnp</name>
    <name type="ordered locus">Athe_1057</name>
</gene>
<proteinExistence type="inferred from homology"/>
<keyword id="KW-0963">Cytoplasm</keyword>
<keyword id="KW-0460">Magnesium</keyword>
<keyword id="KW-0479">Metal-binding</keyword>
<keyword id="KW-0548">Nucleotidyltransferase</keyword>
<keyword id="KW-0694">RNA-binding</keyword>
<keyword id="KW-0808">Transferase</keyword>
<feature type="chain" id="PRO_0000382420" description="Polyribonucleotide nucleotidyltransferase">
    <location>
        <begin position="1"/>
        <end position="701"/>
    </location>
</feature>
<feature type="domain" description="KH" evidence="1">
    <location>
        <begin position="552"/>
        <end position="611"/>
    </location>
</feature>
<feature type="domain" description="S1 motif" evidence="1">
    <location>
        <begin position="621"/>
        <end position="689"/>
    </location>
</feature>
<feature type="binding site" evidence="1">
    <location>
        <position position="485"/>
    </location>
    <ligand>
        <name>Mg(2+)</name>
        <dbReference type="ChEBI" id="CHEBI:18420"/>
    </ligand>
</feature>
<feature type="binding site" evidence="1">
    <location>
        <position position="491"/>
    </location>
    <ligand>
        <name>Mg(2+)</name>
        <dbReference type="ChEBI" id="CHEBI:18420"/>
    </ligand>
</feature>
<organism>
    <name type="scientific">Caldicellulosiruptor bescii (strain ATCC BAA-1888 / DSM 6725 / KCTC 15123 / Z-1320)</name>
    <name type="common">Anaerocellum thermophilum</name>
    <dbReference type="NCBI Taxonomy" id="521460"/>
    <lineage>
        <taxon>Bacteria</taxon>
        <taxon>Bacillati</taxon>
        <taxon>Bacillota</taxon>
        <taxon>Bacillota incertae sedis</taxon>
        <taxon>Caldicellulosiruptorales</taxon>
        <taxon>Caldicellulosiruptoraceae</taxon>
        <taxon>Caldicellulosiruptor</taxon>
    </lineage>
</organism>
<name>PNP_CALBD</name>
<dbReference type="EC" id="2.7.7.8" evidence="1"/>
<dbReference type="EMBL" id="CP001393">
    <property type="protein sequence ID" value="ACM60158.1"/>
    <property type="molecule type" value="Genomic_DNA"/>
</dbReference>
<dbReference type="RefSeq" id="WP_015907570.1">
    <property type="nucleotide sequence ID" value="NC_012034.1"/>
</dbReference>
<dbReference type="SMR" id="B9MR54"/>
<dbReference type="STRING" id="521460.Athe_1057"/>
<dbReference type="GeneID" id="31772408"/>
<dbReference type="KEGG" id="ate:Athe_1057"/>
<dbReference type="eggNOG" id="COG1185">
    <property type="taxonomic scope" value="Bacteria"/>
</dbReference>
<dbReference type="HOGENOM" id="CLU_004217_2_2_9"/>
<dbReference type="Proteomes" id="UP000007723">
    <property type="component" value="Chromosome"/>
</dbReference>
<dbReference type="GO" id="GO:0005829">
    <property type="term" value="C:cytosol"/>
    <property type="evidence" value="ECO:0007669"/>
    <property type="project" value="TreeGrafter"/>
</dbReference>
<dbReference type="GO" id="GO:0000175">
    <property type="term" value="F:3'-5'-RNA exonuclease activity"/>
    <property type="evidence" value="ECO:0007669"/>
    <property type="project" value="TreeGrafter"/>
</dbReference>
<dbReference type="GO" id="GO:0000287">
    <property type="term" value="F:magnesium ion binding"/>
    <property type="evidence" value="ECO:0007669"/>
    <property type="project" value="UniProtKB-UniRule"/>
</dbReference>
<dbReference type="GO" id="GO:0004654">
    <property type="term" value="F:polyribonucleotide nucleotidyltransferase activity"/>
    <property type="evidence" value="ECO:0007669"/>
    <property type="project" value="UniProtKB-UniRule"/>
</dbReference>
<dbReference type="GO" id="GO:0003723">
    <property type="term" value="F:RNA binding"/>
    <property type="evidence" value="ECO:0007669"/>
    <property type="project" value="UniProtKB-UniRule"/>
</dbReference>
<dbReference type="GO" id="GO:0006402">
    <property type="term" value="P:mRNA catabolic process"/>
    <property type="evidence" value="ECO:0007669"/>
    <property type="project" value="UniProtKB-UniRule"/>
</dbReference>
<dbReference type="GO" id="GO:0006396">
    <property type="term" value="P:RNA processing"/>
    <property type="evidence" value="ECO:0007669"/>
    <property type="project" value="InterPro"/>
</dbReference>
<dbReference type="CDD" id="cd02393">
    <property type="entry name" value="KH-I_PNPase"/>
    <property type="match status" value="1"/>
</dbReference>
<dbReference type="CDD" id="cd11363">
    <property type="entry name" value="RNase_PH_PNPase_1"/>
    <property type="match status" value="1"/>
</dbReference>
<dbReference type="CDD" id="cd11364">
    <property type="entry name" value="RNase_PH_PNPase_2"/>
    <property type="match status" value="1"/>
</dbReference>
<dbReference type="CDD" id="cd04472">
    <property type="entry name" value="S1_PNPase"/>
    <property type="match status" value="1"/>
</dbReference>
<dbReference type="FunFam" id="3.30.1370.10:FF:000001">
    <property type="entry name" value="Polyribonucleotide nucleotidyltransferase"/>
    <property type="match status" value="1"/>
</dbReference>
<dbReference type="FunFam" id="3.30.230.70:FF:000001">
    <property type="entry name" value="Polyribonucleotide nucleotidyltransferase"/>
    <property type="match status" value="1"/>
</dbReference>
<dbReference type="FunFam" id="3.30.230.70:FF:000002">
    <property type="entry name" value="Polyribonucleotide nucleotidyltransferase"/>
    <property type="match status" value="1"/>
</dbReference>
<dbReference type="FunFam" id="2.40.50.140:FF:000189">
    <property type="entry name" value="Polyribonucleotide nucleotidyltransferase, putative"/>
    <property type="match status" value="1"/>
</dbReference>
<dbReference type="Gene3D" id="3.30.230.70">
    <property type="entry name" value="GHMP Kinase, N-terminal domain"/>
    <property type="match status" value="2"/>
</dbReference>
<dbReference type="Gene3D" id="3.30.1370.10">
    <property type="entry name" value="K Homology domain, type 1"/>
    <property type="match status" value="1"/>
</dbReference>
<dbReference type="Gene3D" id="2.40.50.140">
    <property type="entry name" value="Nucleic acid-binding proteins"/>
    <property type="match status" value="1"/>
</dbReference>
<dbReference type="HAMAP" id="MF_01595">
    <property type="entry name" value="PNPase"/>
    <property type="match status" value="1"/>
</dbReference>
<dbReference type="InterPro" id="IPR001247">
    <property type="entry name" value="ExoRNase_PH_dom1"/>
</dbReference>
<dbReference type="InterPro" id="IPR015847">
    <property type="entry name" value="ExoRNase_PH_dom2"/>
</dbReference>
<dbReference type="InterPro" id="IPR036345">
    <property type="entry name" value="ExoRNase_PH_dom2_sf"/>
</dbReference>
<dbReference type="InterPro" id="IPR004087">
    <property type="entry name" value="KH_dom"/>
</dbReference>
<dbReference type="InterPro" id="IPR004088">
    <property type="entry name" value="KH_dom_type_1"/>
</dbReference>
<dbReference type="InterPro" id="IPR036612">
    <property type="entry name" value="KH_dom_type_1_sf"/>
</dbReference>
<dbReference type="InterPro" id="IPR012340">
    <property type="entry name" value="NA-bd_OB-fold"/>
</dbReference>
<dbReference type="InterPro" id="IPR012162">
    <property type="entry name" value="PNPase"/>
</dbReference>
<dbReference type="InterPro" id="IPR027408">
    <property type="entry name" value="PNPase/RNase_PH_dom_sf"/>
</dbReference>
<dbReference type="InterPro" id="IPR015848">
    <property type="entry name" value="PNPase_PH_RNA-bd_bac/org-type"/>
</dbReference>
<dbReference type="InterPro" id="IPR036456">
    <property type="entry name" value="PNPase_PH_RNA-bd_sf"/>
</dbReference>
<dbReference type="InterPro" id="IPR020568">
    <property type="entry name" value="Ribosomal_Su5_D2-typ_SF"/>
</dbReference>
<dbReference type="InterPro" id="IPR003029">
    <property type="entry name" value="S1_domain"/>
</dbReference>
<dbReference type="NCBIfam" id="TIGR03591">
    <property type="entry name" value="polynuc_phos"/>
    <property type="match status" value="1"/>
</dbReference>
<dbReference type="NCBIfam" id="NF008805">
    <property type="entry name" value="PRK11824.1"/>
    <property type="match status" value="1"/>
</dbReference>
<dbReference type="PANTHER" id="PTHR11252">
    <property type="entry name" value="POLYRIBONUCLEOTIDE NUCLEOTIDYLTRANSFERASE"/>
    <property type="match status" value="1"/>
</dbReference>
<dbReference type="PANTHER" id="PTHR11252:SF0">
    <property type="entry name" value="POLYRIBONUCLEOTIDE NUCLEOTIDYLTRANSFERASE 1, MITOCHONDRIAL"/>
    <property type="match status" value="1"/>
</dbReference>
<dbReference type="Pfam" id="PF00013">
    <property type="entry name" value="KH_1"/>
    <property type="match status" value="1"/>
</dbReference>
<dbReference type="Pfam" id="PF03726">
    <property type="entry name" value="PNPase"/>
    <property type="match status" value="1"/>
</dbReference>
<dbReference type="Pfam" id="PF01138">
    <property type="entry name" value="RNase_PH"/>
    <property type="match status" value="2"/>
</dbReference>
<dbReference type="Pfam" id="PF03725">
    <property type="entry name" value="RNase_PH_C"/>
    <property type="match status" value="2"/>
</dbReference>
<dbReference type="Pfam" id="PF00575">
    <property type="entry name" value="S1"/>
    <property type="match status" value="1"/>
</dbReference>
<dbReference type="PIRSF" id="PIRSF005499">
    <property type="entry name" value="PNPase"/>
    <property type="match status" value="1"/>
</dbReference>
<dbReference type="SMART" id="SM00322">
    <property type="entry name" value="KH"/>
    <property type="match status" value="1"/>
</dbReference>
<dbReference type="SMART" id="SM00316">
    <property type="entry name" value="S1"/>
    <property type="match status" value="1"/>
</dbReference>
<dbReference type="SUPFAM" id="SSF54791">
    <property type="entry name" value="Eukaryotic type KH-domain (KH-domain type I)"/>
    <property type="match status" value="1"/>
</dbReference>
<dbReference type="SUPFAM" id="SSF50249">
    <property type="entry name" value="Nucleic acid-binding proteins"/>
    <property type="match status" value="1"/>
</dbReference>
<dbReference type="SUPFAM" id="SSF46915">
    <property type="entry name" value="Polynucleotide phosphorylase/guanosine pentaphosphate synthase (PNPase/GPSI), domain 3"/>
    <property type="match status" value="1"/>
</dbReference>
<dbReference type="SUPFAM" id="SSF55666">
    <property type="entry name" value="Ribonuclease PH domain 2-like"/>
    <property type="match status" value="2"/>
</dbReference>
<dbReference type="SUPFAM" id="SSF54211">
    <property type="entry name" value="Ribosomal protein S5 domain 2-like"/>
    <property type="match status" value="2"/>
</dbReference>
<dbReference type="PROSITE" id="PS50084">
    <property type="entry name" value="KH_TYPE_1"/>
    <property type="match status" value="1"/>
</dbReference>
<dbReference type="PROSITE" id="PS50126">
    <property type="entry name" value="S1"/>
    <property type="match status" value="1"/>
</dbReference>
<reference key="1">
    <citation type="submission" date="2009-01" db="EMBL/GenBank/DDBJ databases">
        <title>Complete sequence of chromosome of Caldicellulosiruptor becscii DSM 6725.</title>
        <authorList>
            <person name="Lucas S."/>
            <person name="Copeland A."/>
            <person name="Lapidus A."/>
            <person name="Glavina del Rio T."/>
            <person name="Tice H."/>
            <person name="Bruce D."/>
            <person name="Goodwin L."/>
            <person name="Pitluck S."/>
            <person name="Sims D."/>
            <person name="Meincke L."/>
            <person name="Brettin T."/>
            <person name="Detter J.C."/>
            <person name="Han C."/>
            <person name="Larimer F."/>
            <person name="Land M."/>
            <person name="Hauser L."/>
            <person name="Kyrpides N."/>
            <person name="Ovchinnikova G."/>
            <person name="Kataeva I."/>
            <person name="Adams M.W.W."/>
        </authorList>
    </citation>
    <scope>NUCLEOTIDE SEQUENCE [LARGE SCALE GENOMIC DNA]</scope>
    <source>
        <strain>ATCC BAA-1888 / DSM 6725 / KCTC 15123 / Z-1320</strain>
    </source>
</reference>